<feature type="chain" id="PRO_0000155281" description="Thymidylate kinase">
    <location>
        <begin position="1"/>
        <end position="210"/>
    </location>
</feature>
<feature type="binding site" evidence="1">
    <location>
        <begin position="10"/>
        <end position="17"/>
    </location>
    <ligand>
        <name>ATP</name>
        <dbReference type="ChEBI" id="CHEBI:30616"/>
    </ligand>
</feature>
<evidence type="ECO:0000255" key="1"/>
<evidence type="ECO:0000305" key="2"/>
<sequence length="210" mass="23693">MKGKFIVIEGLEGAGKSSAHQSVVRVLHELGIQDVVFTREPGGTPLAEKLRHLIKHETEEPVTDKAELLMLYAARIQLVENVIKPALMQGKWVVGDRHDMSSQAYQGGGRQLDPHFMLTLKETVLGNFEPDLTIYLDIDPSVGLARARGRGELDRIEQMDLDFFHRTRARYLELVKDNPKAVVINAEQSIELVQADIESAVKNWWKSNEK</sequence>
<dbReference type="EC" id="2.7.4.9"/>
<dbReference type="EMBL" id="L42023">
    <property type="protein sequence ID" value="AAC22114.1"/>
    <property type="molecule type" value="Genomic_DNA"/>
</dbReference>
<dbReference type="RefSeq" id="NP_438617.2">
    <property type="nucleotide sequence ID" value="NC_000907.1"/>
</dbReference>
<dbReference type="SMR" id="P44719"/>
<dbReference type="STRING" id="71421.HI_0456"/>
<dbReference type="EnsemblBacteria" id="AAC22114">
    <property type="protein sequence ID" value="AAC22114"/>
    <property type="gene ID" value="HI_0456"/>
</dbReference>
<dbReference type="KEGG" id="hin:HI_0456"/>
<dbReference type="PATRIC" id="fig|71421.8.peg.476"/>
<dbReference type="eggNOG" id="COG0125">
    <property type="taxonomic scope" value="Bacteria"/>
</dbReference>
<dbReference type="HOGENOM" id="CLU_049131_0_1_6"/>
<dbReference type="OrthoDB" id="9774907at2"/>
<dbReference type="PhylomeDB" id="P44719"/>
<dbReference type="Proteomes" id="UP000000579">
    <property type="component" value="Chromosome"/>
</dbReference>
<dbReference type="GO" id="GO:0005737">
    <property type="term" value="C:cytoplasm"/>
    <property type="evidence" value="ECO:0000318"/>
    <property type="project" value="GO_Central"/>
</dbReference>
<dbReference type="GO" id="GO:0005829">
    <property type="term" value="C:cytosol"/>
    <property type="evidence" value="ECO:0000318"/>
    <property type="project" value="GO_Central"/>
</dbReference>
<dbReference type="GO" id="GO:0005524">
    <property type="term" value="F:ATP binding"/>
    <property type="evidence" value="ECO:0007669"/>
    <property type="project" value="UniProtKB-UniRule"/>
</dbReference>
<dbReference type="GO" id="GO:0004798">
    <property type="term" value="F:dTMP kinase activity"/>
    <property type="evidence" value="ECO:0000318"/>
    <property type="project" value="GO_Central"/>
</dbReference>
<dbReference type="GO" id="GO:0006233">
    <property type="term" value="P:dTDP biosynthetic process"/>
    <property type="evidence" value="ECO:0000318"/>
    <property type="project" value="GO_Central"/>
</dbReference>
<dbReference type="GO" id="GO:0006235">
    <property type="term" value="P:dTTP biosynthetic process"/>
    <property type="evidence" value="ECO:0000318"/>
    <property type="project" value="GO_Central"/>
</dbReference>
<dbReference type="GO" id="GO:0006227">
    <property type="term" value="P:dUDP biosynthetic process"/>
    <property type="evidence" value="ECO:0000318"/>
    <property type="project" value="GO_Central"/>
</dbReference>
<dbReference type="CDD" id="cd01672">
    <property type="entry name" value="TMPK"/>
    <property type="match status" value="1"/>
</dbReference>
<dbReference type="FunFam" id="3.40.50.300:FF:000321">
    <property type="entry name" value="Thymidylate kinase"/>
    <property type="match status" value="1"/>
</dbReference>
<dbReference type="Gene3D" id="3.40.50.300">
    <property type="entry name" value="P-loop containing nucleotide triphosphate hydrolases"/>
    <property type="match status" value="1"/>
</dbReference>
<dbReference type="HAMAP" id="MF_00165">
    <property type="entry name" value="Thymidylate_kinase"/>
    <property type="match status" value="1"/>
</dbReference>
<dbReference type="InterPro" id="IPR027417">
    <property type="entry name" value="P-loop_NTPase"/>
</dbReference>
<dbReference type="InterPro" id="IPR039430">
    <property type="entry name" value="Thymidylate_kin-like_dom"/>
</dbReference>
<dbReference type="InterPro" id="IPR018095">
    <property type="entry name" value="Thymidylate_kin_CS"/>
</dbReference>
<dbReference type="InterPro" id="IPR018094">
    <property type="entry name" value="Thymidylate_kinase"/>
</dbReference>
<dbReference type="NCBIfam" id="TIGR00041">
    <property type="entry name" value="DTMP_kinase"/>
    <property type="match status" value="1"/>
</dbReference>
<dbReference type="PANTHER" id="PTHR10344">
    <property type="entry name" value="THYMIDYLATE KINASE"/>
    <property type="match status" value="1"/>
</dbReference>
<dbReference type="PANTHER" id="PTHR10344:SF4">
    <property type="entry name" value="UMP-CMP KINASE 2, MITOCHONDRIAL"/>
    <property type="match status" value="1"/>
</dbReference>
<dbReference type="Pfam" id="PF02223">
    <property type="entry name" value="Thymidylate_kin"/>
    <property type="match status" value="1"/>
</dbReference>
<dbReference type="SUPFAM" id="SSF52540">
    <property type="entry name" value="P-loop containing nucleoside triphosphate hydrolases"/>
    <property type="match status" value="1"/>
</dbReference>
<dbReference type="PROSITE" id="PS01331">
    <property type="entry name" value="THYMIDYLATE_KINASE"/>
    <property type="match status" value="1"/>
</dbReference>
<organism>
    <name type="scientific">Haemophilus influenzae (strain ATCC 51907 / DSM 11121 / KW20 / Rd)</name>
    <dbReference type="NCBI Taxonomy" id="71421"/>
    <lineage>
        <taxon>Bacteria</taxon>
        <taxon>Pseudomonadati</taxon>
        <taxon>Pseudomonadota</taxon>
        <taxon>Gammaproteobacteria</taxon>
        <taxon>Pasteurellales</taxon>
        <taxon>Pasteurellaceae</taxon>
        <taxon>Haemophilus</taxon>
    </lineage>
</organism>
<gene>
    <name type="primary">tmk</name>
    <name type="ordered locus">HI_0456</name>
</gene>
<protein>
    <recommendedName>
        <fullName>Thymidylate kinase</fullName>
        <ecNumber>2.7.4.9</ecNumber>
    </recommendedName>
    <alternativeName>
        <fullName>dTMP kinase</fullName>
    </alternativeName>
</protein>
<accession>P44719</accession>
<name>KTHY_HAEIN</name>
<comment type="function">
    <text>Phosphorylation of dTMP to form dTDP in both de novo and salvage pathways of dTTP synthesis.</text>
</comment>
<comment type="catalytic activity">
    <reaction>
        <text>dTMP + ATP = dTDP + ADP</text>
        <dbReference type="Rhea" id="RHEA:13517"/>
        <dbReference type="ChEBI" id="CHEBI:30616"/>
        <dbReference type="ChEBI" id="CHEBI:58369"/>
        <dbReference type="ChEBI" id="CHEBI:63528"/>
        <dbReference type="ChEBI" id="CHEBI:456216"/>
        <dbReference type="EC" id="2.7.4.9"/>
    </reaction>
</comment>
<comment type="similarity">
    <text evidence="2">Belongs to the thymidylate kinase family.</text>
</comment>
<reference key="1">
    <citation type="journal article" date="1995" name="Science">
        <title>Whole-genome random sequencing and assembly of Haemophilus influenzae Rd.</title>
        <authorList>
            <person name="Fleischmann R.D."/>
            <person name="Adams M.D."/>
            <person name="White O."/>
            <person name="Clayton R.A."/>
            <person name="Kirkness E.F."/>
            <person name="Kerlavage A.R."/>
            <person name="Bult C.J."/>
            <person name="Tomb J.-F."/>
            <person name="Dougherty B.A."/>
            <person name="Merrick J.M."/>
            <person name="McKenney K."/>
            <person name="Sutton G.G."/>
            <person name="FitzHugh W."/>
            <person name="Fields C.A."/>
            <person name="Gocayne J.D."/>
            <person name="Scott J.D."/>
            <person name="Shirley R."/>
            <person name="Liu L.-I."/>
            <person name="Glodek A."/>
            <person name="Kelley J.M."/>
            <person name="Weidman J.F."/>
            <person name="Phillips C.A."/>
            <person name="Spriggs T."/>
            <person name="Hedblom E."/>
            <person name="Cotton M.D."/>
            <person name="Utterback T.R."/>
            <person name="Hanna M.C."/>
            <person name="Nguyen D.T."/>
            <person name="Saudek D.M."/>
            <person name="Brandon R.C."/>
            <person name="Fine L.D."/>
            <person name="Fritchman J.L."/>
            <person name="Fuhrmann J.L."/>
            <person name="Geoghagen N.S.M."/>
            <person name="Gnehm C.L."/>
            <person name="McDonald L.A."/>
            <person name="Small K.V."/>
            <person name="Fraser C.M."/>
            <person name="Smith H.O."/>
            <person name="Venter J.C."/>
        </authorList>
    </citation>
    <scope>NUCLEOTIDE SEQUENCE [LARGE SCALE GENOMIC DNA]</scope>
    <source>
        <strain>ATCC 51907 / DSM 11121 / KW20 / Rd</strain>
    </source>
</reference>
<reference key="2">
    <citation type="journal article" date="2000" name="Electrophoresis">
        <title>Two-dimensional map of the proteome of Haemophilus influenzae.</title>
        <authorList>
            <person name="Langen H."/>
            <person name="Takacs B."/>
            <person name="Evers S."/>
            <person name="Berndt P."/>
            <person name="Lahm H.W."/>
            <person name="Wipf B."/>
            <person name="Gray C."/>
            <person name="Fountoulakis M."/>
        </authorList>
    </citation>
    <scope>IDENTIFICATION BY MASS SPECTROMETRY</scope>
    <source>
        <strain>ATCC 51907 / DSM 11121 / KW20 / Rd</strain>
    </source>
</reference>
<proteinExistence type="evidence at protein level"/>
<keyword id="KW-0067">ATP-binding</keyword>
<keyword id="KW-0418">Kinase</keyword>
<keyword id="KW-0545">Nucleotide biosynthesis</keyword>
<keyword id="KW-0547">Nucleotide-binding</keyword>
<keyword id="KW-1185">Reference proteome</keyword>
<keyword id="KW-0808">Transferase</keyword>